<organism>
    <name type="scientific">Dictyostelium discoideum</name>
    <name type="common">Social amoeba</name>
    <dbReference type="NCBI Taxonomy" id="44689"/>
    <lineage>
        <taxon>Eukaryota</taxon>
        <taxon>Amoebozoa</taxon>
        <taxon>Evosea</taxon>
        <taxon>Eumycetozoa</taxon>
        <taxon>Dictyostelia</taxon>
        <taxon>Dictyosteliales</taxon>
        <taxon>Dictyosteliaceae</taxon>
        <taxon>Dictyostelium</taxon>
    </lineage>
</organism>
<gene>
    <name type="primary">polr2d</name>
    <name type="synonym">rpb4</name>
    <name type="ORF">DDB_G0282739</name>
</gene>
<accession>Q54S04</accession>
<comment type="function">
    <text evidence="1">DNA-dependent RNA polymerase catalyzes the transcription of DNA into RNA using the four ribonucleoside triphosphates as substrates. Component of RNA polymerase II which synthesizes mRNA precursors and many functional non-coding RNAs. Pol II is the central component of the basal RNA polymerase II transcription machinery. It is composed of mobile elements that move relative to each other. RPB4 is part of a subcomplex with RPB7 that binds to a pocket formed by RPB1, RPB2 and RPB6 at the base of the clamp element. The RPB4-RPB7 subcomplex seems to lock the clamp via RPB7 in the closed conformation thus preventing double-stranded DNA to enter the active site cleft. The RPB4-RPB7 subcomplex binds single-stranded DNA and RNA (By similarity).</text>
</comment>
<comment type="subunit">
    <text evidence="1">Component of the RNA polymerase II (Pol II) complex consisting of 12 subunits. RPB4 and RPB7 form a subcomplex that protrudes from the 10-subunit Pol II core complex (By similarity).</text>
</comment>
<comment type="subcellular location">
    <subcellularLocation>
        <location evidence="1">Nucleus</location>
    </subcellularLocation>
</comment>
<comment type="similarity">
    <text evidence="2">Belongs to the eukaryotic RPB4 RNA polymerase subunit family.</text>
</comment>
<keyword id="KW-0240">DNA-directed RNA polymerase</keyword>
<keyword id="KW-0539">Nucleus</keyword>
<keyword id="KW-1185">Reference proteome</keyword>
<keyword id="KW-0804">Transcription</keyword>
<reference key="1">
    <citation type="journal article" date="2005" name="Nature">
        <title>The genome of the social amoeba Dictyostelium discoideum.</title>
        <authorList>
            <person name="Eichinger L."/>
            <person name="Pachebat J.A."/>
            <person name="Gloeckner G."/>
            <person name="Rajandream M.A."/>
            <person name="Sucgang R."/>
            <person name="Berriman M."/>
            <person name="Song J."/>
            <person name="Olsen R."/>
            <person name="Szafranski K."/>
            <person name="Xu Q."/>
            <person name="Tunggal B."/>
            <person name="Kummerfeld S."/>
            <person name="Madera M."/>
            <person name="Konfortov B.A."/>
            <person name="Rivero F."/>
            <person name="Bankier A.T."/>
            <person name="Lehmann R."/>
            <person name="Hamlin N."/>
            <person name="Davies R."/>
            <person name="Gaudet P."/>
            <person name="Fey P."/>
            <person name="Pilcher K."/>
            <person name="Chen G."/>
            <person name="Saunders D."/>
            <person name="Sodergren E.J."/>
            <person name="Davis P."/>
            <person name="Kerhornou A."/>
            <person name="Nie X."/>
            <person name="Hall N."/>
            <person name="Anjard C."/>
            <person name="Hemphill L."/>
            <person name="Bason N."/>
            <person name="Farbrother P."/>
            <person name="Desany B."/>
            <person name="Just E."/>
            <person name="Morio T."/>
            <person name="Rost R."/>
            <person name="Churcher C.M."/>
            <person name="Cooper J."/>
            <person name="Haydock S."/>
            <person name="van Driessche N."/>
            <person name="Cronin A."/>
            <person name="Goodhead I."/>
            <person name="Muzny D.M."/>
            <person name="Mourier T."/>
            <person name="Pain A."/>
            <person name="Lu M."/>
            <person name="Harper D."/>
            <person name="Lindsay R."/>
            <person name="Hauser H."/>
            <person name="James K.D."/>
            <person name="Quiles M."/>
            <person name="Madan Babu M."/>
            <person name="Saito T."/>
            <person name="Buchrieser C."/>
            <person name="Wardroper A."/>
            <person name="Felder M."/>
            <person name="Thangavelu M."/>
            <person name="Johnson D."/>
            <person name="Knights A."/>
            <person name="Loulseged H."/>
            <person name="Mungall K.L."/>
            <person name="Oliver K."/>
            <person name="Price C."/>
            <person name="Quail M.A."/>
            <person name="Urushihara H."/>
            <person name="Hernandez J."/>
            <person name="Rabbinowitsch E."/>
            <person name="Steffen D."/>
            <person name="Sanders M."/>
            <person name="Ma J."/>
            <person name="Kohara Y."/>
            <person name="Sharp S."/>
            <person name="Simmonds M.N."/>
            <person name="Spiegler S."/>
            <person name="Tivey A."/>
            <person name="Sugano S."/>
            <person name="White B."/>
            <person name="Walker D."/>
            <person name="Woodward J.R."/>
            <person name="Winckler T."/>
            <person name="Tanaka Y."/>
            <person name="Shaulsky G."/>
            <person name="Schleicher M."/>
            <person name="Weinstock G.M."/>
            <person name="Rosenthal A."/>
            <person name="Cox E.C."/>
            <person name="Chisholm R.L."/>
            <person name="Gibbs R.A."/>
            <person name="Loomis W.F."/>
            <person name="Platzer M."/>
            <person name="Kay R.R."/>
            <person name="Williams J.G."/>
            <person name="Dear P.H."/>
            <person name="Noegel A.A."/>
            <person name="Barrell B.G."/>
            <person name="Kuspa A."/>
        </authorList>
    </citation>
    <scope>NUCLEOTIDE SEQUENCE [LARGE SCALE GENOMIC DNA]</scope>
    <source>
        <strain>AX4</strain>
    </source>
</reference>
<name>RPB4_DICDI</name>
<protein>
    <recommendedName>
        <fullName>DNA-directed RNA polymerase II subunit rpb4</fullName>
        <shortName>RNA polymerase II subunit B4</shortName>
    </recommendedName>
    <alternativeName>
        <fullName>DNA-directed RNA polymerase II subunit D</fullName>
    </alternativeName>
</protein>
<evidence type="ECO:0000250" key="1"/>
<evidence type="ECO:0000305" key="2"/>
<sequence>MTDPLIKRSGIQEEEDLTTLKFPRDLKDAKFLLNSEVAILLEHRKGISESEGTEFPQNTLLIHLYYNSINDIIRTFHKTLAYAEKFSRYKNKTSIKQVRTALSKQNLEEFEIASLANLCPEISDEAKSLIPSLKKMEDDELQAILDELSNLRKFN</sequence>
<dbReference type="EMBL" id="AAFI02000047">
    <property type="protein sequence ID" value="EAL66229.1"/>
    <property type="molecule type" value="Genomic_DNA"/>
</dbReference>
<dbReference type="RefSeq" id="XP_640235.1">
    <property type="nucleotide sequence ID" value="XM_635143.1"/>
</dbReference>
<dbReference type="SMR" id="Q54S04"/>
<dbReference type="FunCoup" id="Q54S04">
    <property type="interactions" value="1015"/>
</dbReference>
<dbReference type="STRING" id="44689.Q54S04"/>
<dbReference type="PaxDb" id="44689-DDB0216294"/>
<dbReference type="EnsemblProtists" id="EAL66229">
    <property type="protein sequence ID" value="EAL66229"/>
    <property type="gene ID" value="DDB_G0282739"/>
</dbReference>
<dbReference type="GeneID" id="8623774"/>
<dbReference type="KEGG" id="ddi:DDB_G0282739"/>
<dbReference type="dictyBase" id="DDB_G0282739">
    <property type="gene designation" value="rpb4"/>
</dbReference>
<dbReference type="VEuPathDB" id="AmoebaDB:DDB_G0282739"/>
<dbReference type="eggNOG" id="KOG2351">
    <property type="taxonomic scope" value="Eukaryota"/>
</dbReference>
<dbReference type="HOGENOM" id="CLU_110332_2_1_1"/>
<dbReference type="InParanoid" id="Q54S04"/>
<dbReference type="OMA" id="PEFKNCK"/>
<dbReference type="PhylomeDB" id="Q54S04"/>
<dbReference type="Reactome" id="R-DDI-113418">
    <property type="pathway name" value="Formation of the Early Elongation Complex"/>
</dbReference>
<dbReference type="Reactome" id="R-DDI-674695">
    <property type="pathway name" value="RNA Polymerase II Pre-transcription Events"/>
</dbReference>
<dbReference type="Reactome" id="R-DDI-6781823">
    <property type="pathway name" value="Formation of TC-NER Pre-Incision Complex"/>
</dbReference>
<dbReference type="Reactome" id="R-DDI-6782135">
    <property type="pathway name" value="Dual incision in TC-NER"/>
</dbReference>
<dbReference type="Reactome" id="R-DDI-6782210">
    <property type="pathway name" value="Gap-filling DNA repair synthesis and ligation in TC-NER"/>
</dbReference>
<dbReference type="Reactome" id="R-DDI-6796648">
    <property type="pathway name" value="TP53 Regulates Transcription of DNA Repair Genes"/>
</dbReference>
<dbReference type="Reactome" id="R-DDI-6807505">
    <property type="pathway name" value="RNA polymerase II transcribes snRNA genes"/>
</dbReference>
<dbReference type="Reactome" id="R-DDI-72086">
    <property type="pathway name" value="mRNA Capping"/>
</dbReference>
<dbReference type="Reactome" id="R-DDI-72163">
    <property type="pathway name" value="mRNA Splicing - Major Pathway"/>
</dbReference>
<dbReference type="Reactome" id="R-DDI-72203">
    <property type="pathway name" value="Processing of Capped Intron-Containing Pre-mRNA"/>
</dbReference>
<dbReference type="Reactome" id="R-DDI-73776">
    <property type="pathway name" value="RNA Polymerase II Promoter Escape"/>
</dbReference>
<dbReference type="Reactome" id="R-DDI-73779">
    <property type="pathway name" value="RNA Polymerase II Transcription Pre-Initiation And Promoter Opening"/>
</dbReference>
<dbReference type="Reactome" id="R-DDI-75953">
    <property type="pathway name" value="RNA Polymerase II Transcription Initiation"/>
</dbReference>
<dbReference type="Reactome" id="R-DDI-76042">
    <property type="pathway name" value="RNA Polymerase II Transcription Initiation And Promoter Clearance"/>
</dbReference>
<dbReference type="Reactome" id="R-DDI-77075">
    <property type="pathway name" value="RNA Pol II CTD phosphorylation and interaction with CE"/>
</dbReference>
<dbReference type="Reactome" id="R-DDI-9018519">
    <property type="pathway name" value="Estrogen-dependent gene expression"/>
</dbReference>
<dbReference type="PRO" id="PR:Q54S04"/>
<dbReference type="Proteomes" id="UP000002195">
    <property type="component" value="Chromosome 3"/>
</dbReference>
<dbReference type="GO" id="GO:0005737">
    <property type="term" value="C:cytoplasm"/>
    <property type="evidence" value="ECO:0000314"/>
    <property type="project" value="dictyBase"/>
</dbReference>
<dbReference type="GO" id="GO:0005634">
    <property type="term" value="C:nucleus"/>
    <property type="evidence" value="ECO:0000314"/>
    <property type="project" value="dictyBase"/>
</dbReference>
<dbReference type="GO" id="GO:0005665">
    <property type="term" value="C:RNA polymerase II, core complex"/>
    <property type="evidence" value="ECO:0000250"/>
    <property type="project" value="dictyBase"/>
</dbReference>
<dbReference type="GO" id="GO:0003899">
    <property type="term" value="F:DNA-directed RNA polymerase activity"/>
    <property type="evidence" value="ECO:0000316"/>
    <property type="project" value="dictyBase"/>
</dbReference>
<dbReference type="GO" id="GO:0000166">
    <property type="term" value="F:nucleotide binding"/>
    <property type="evidence" value="ECO:0007669"/>
    <property type="project" value="InterPro"/>
</dbReference>
<dbReference type="GO" id="GO:0031369">
    <property type="term" value="F:translation initiation factor binding"/>
    <property type="evidence" value="ECO:0000318"/>
    <property type="project" value="GO_Central"/>
</dbReference>
<dbReference type="GO" id="GO:0006366">
    <property type="term" value="P:transcription by RNA polymerase II"/>
    <property type="evidence" value="ECO:0000316"/>
    <property type="project" value="dictyBase"/>
</dbReference>
<dbReference type="GO" id="GO:0006367">
    <property type="term" value="P:transcription initiation at RNA polymerase II promoter"/>
    <property type="evidence" value="ECO:0000318"/>
    <property type="project" value="GO_Central"/>
</dbReference>
<dbReference type="FunFam" id="1.20.1250.40:FF:000010">
    <property type="entry name" value="RNA Polymerase II (B) subunit"/>
    <property type="match status" value="1"/>
</dbReference>
<dbReference type="Gene3D" id="1.20.1250.40">
    <property type="match status" value="1"/>
</dbReference>
<dbReference type="InterPro" id="IPR010997">
    <property type="entry name" value="HRDC-like_sf"/>
</dbReference>
<dbReference type="InterPro" id="IPR006590">
    <property type="entry name" value="RNA_pol_Rpb4/RPC9_core"/>
</dbReference>
<dbReference type="InterPro" id="IPR045222">
    <property type="entry name" value="Rpb4-like"/>
</dbReference>
<dbReference type="InterPro" id="IPR005574">
    <property type="entry name" value="Rpb4/RPC9"/>
</dbReference>
<dbReference type="InterPro" id="IPR038324">
    <property type="entry name" value="Rpb4/RPC9_sf"/>
</dbReference>
<dbReference type="PANTHER" id="PTHR21297">
    <property type="entry name" value="DNA-DIRECTED RNA POLYMERASE II"/>
    <property type="match status" value="1"/>
</dbReference>
<dbReference type="Pfam" id="PF03874">
    <property type="entry name" value="RNA_pol_Rpb4"/>
    <property type="match status" value="1"/>
</dbReference>
<dbReference type="SMART" id="SM00657">
    <property type="entry name" value="RPOL4c"/>
    <property type="match status" value="1"/>
</dbReference>
<dbReference type="SUPFAM" id="SSF47819">
    <property type="entry name" value="HRDC-like"/>
    <property type="match status" value="1"/>
</dbReference>
<proteinExistence type="inferred from homology"/>
<feature type="chain" id="PRO_0000329431" description="DNA-directed RNA polymerase II subunit rpb4">
    <location>
        <begin position="1"/>
        <end position="155"/>
    </location>
</feature>